<protein>
    <recommendedName>
        <fullName>Phosphoribosyl-dephospho-CoA transferase</fullName>
        <ecNumber>2.7.7.66</ecNumber>
    </recommendedName>
    <alternativeName>
        <fullName>Malonate decarboxylase holo-[acyl-carrier-protein] synthase</fullName>
        <shortName>Holo-ACP synthase</shortName>
    </alternativeName>
</protein>
<feature type="chain" id="PRO_0000220293" description="Phosphoribosyl-dephospho-CoA transferase">
    <location>
        <begin position="1"/>
        <end position="205"/>
    </location>
</feature>
<feature type="active site" evidence="2">
    <location>
        <position position="134"/>
    </location>
</feature>
<feature type="active site" evidence="2">
    <location>
        <position position="136"/>
    </location>
</feature>
<feature type="mutagenesis site" description="Abolishes transfer of prosthetic group to acyl carrier protein." evidence="2">
    <original>D</original>
    <variation>A</variation>
    <location>
        <position position="134"/>
    </location>
</feature>
<feature type="mutagenesis site" description="Abolishes transfer of prosthetic group to acyl carrier protein." evidence="2">
    <original>D</original>
    <variation>A</variation>
    <location>
        <position position="136"/>
    </location>
</feature>
<feature type="sequence conflict" description="In Ref. 2; AAA99821." evidence="3" ref="2">
    <original>Q</original>
    <variation>H</variation>
    <location>
        <position position="30"/>
    </location>
</feature>
<dbReference type="EC" id="2.7.7.66"/>
<dbReference type="EMBL" id="U95087">
    <property type="protein sequence ID" value="AAC45459.1"/>
    <property type="molecule type" value="Genomic_DNA"/>
</dbReference>
<dbReference type="EMBL" id="U56096">
    <property type="protein sequence ID" value="AAA99821.1"/>
    <property type="molecule type" value="Genomic_DNA"/>
</dbReference>
<dbReference type="RefSeq" id="WP_004152239.1">
    <property type="nucleotide sequence ID" value="NZ_WYAL01000007.1"/>
</dbReference>
<dbReference type="BioCyc" id="MetaCyc:MONOMER-14204"/>
<dbReference type="GO" id="GO:0016779">
    <property type="term" value="F:nucleotidyltransferase activity"/>
    <property type="evidence" value="ECO:0007669"/>
    <property type="project" value="UniProtKB-UniRule"/>
</dbReference>
<dbReference type="HAMAP" id="MF_00650">
    <property type="entry name" value="Malonate_MdcG"/>
    <property type="match status" value="1"/>
</dbReference>
<dbReference type="InterPro" id="IPR017557">
    <property type="entry name" value="Holo-ACP_synthase"/>
</dbReference>
<dbReference type="InterPro" id="IPR049180">
    <property type="entry name" value="MdcG_C"/>
</dbReference>
<dbReference type="InterPro" id="IPR048903">
    <property type="entry name" value="MdcG_N"/>
</dbReference>
<dbReference type="NCBIfam" id="TIGR03135">
    <property type="entry name" value="malonate_mdcG"/>
    <property type="match status" value="1"/>
</dbReference>
<dbReference type="NCBIfam" id="NF002332">
    <property type="entry name" value="PRK01293.1"/>
    <property type="match status" value="1"/>
</dbReference>
<dbReference type="Pfam" id="PF10620">
    <property type="entry name" value="MdcG"/>
    <property type="match status" value="1"/>
</dbReference>
<dbReference type="Pfam" id="PF20866">
    <property type="entry name" value="MdcG_N"/>
    <property type="match status" value="1"/>
</dbReference>
<accession>P71426</accession>
<accession>O32716</accession>
<keyword id="KW-0548">Nucleotidyltransferase</keyword>
<keyword id="KW-0808">Transferase</keyword>
<evidence type="ECO:0000269" key="1">
    <source>
    </source>
</evidence>
<evidence type="ECO:0000269" key="2">
    <source>
    </source>
</evidence>
<evidence type="ECO:0000305" key="3"/>
<proteinExistence type="evidence at protein level"/>
<organism>
    <name type="scientific">Klebsiella pneumoniae</name>
    <dbReference type="NCBI Taxonomy" id="573"/>
    <lineage>
        <taxon>Bacteria</taxon>
        <taxon>Pseudomonadati</taxon>
        <taxon>Pseudomonadota</taxon>
        <taxon>Gammaproteobacteria</taxon>
        <taxon>Enterobacterales</taxon>
        <taxon>Enterobacteriaceae</taxon>
        <taxon>Klebsiella/Raoultella group</taxon>
        <taxon>Klebsiella</taxon>
        <taxon>Klebsiella pneumoniae complex</taxon>
    </lineage>
</organism>
<comment type="function">
    <text evidence="1">Transfers 2'-(5-triphosphoribosyl)-3'-dephosphocoenzyme-A to the apo-[acyl-carrier-protein] of the malonate decarboxylase to yield holo-[acyl-carrier-protein].</text>
</comment>
<comment type="catalytic activity">
    <reaction evidence="1">
        <text>apo-[malonate decarboxylase ACP] + 2'-(5''-triphospho-alpha-D-ribosyl)-3'-dephospho-CoA = holo-[malonate decarboxylase ACP] + diphosphate</text>
        <dbReference type="Rhea" id="RHEA:42644"/>
        <dbReference type="Rhea" id="RHEA-COMP:10160"/>
        <dbReference type="Rhea" id="RHEA-COMP:10161"/>
        <dbReference type="ChEBI" id="CHEBI:29999"/>
        <dbReference type="ChEBI" id="CHEBI:33019"/>
        <dbReference type="ChEBI" id="CHEBI:61378"/>
        <dbReference type="ChEBI" id="CHEBI:82683"/>
        <dbReference type="EC" id="2.7.7.66"/>
    </reaction>
</comment>
<comment type="similarity">
    <text evidence="3">Belongs to the MdcG family.</text>
</comment>
<gene>
    <name type="primary">mdcG</name>
    <name type="synonym">mdcF</name>
</gene>
<name>MDCG_KLEPN</name>
<sequence>MSATPRPHDLVWLNHASALEDIAEPWVAQQWRAALPVVVRRDVDDQARVPVGVRGMKREQRAAGWVQARNIVRSVTPEMLVDREVLLHSPFVSQPPVQGAIALTLHRWPWGWGVTGSTGYALATEIPVLHAASDLDLLIRAPQPLDREALLEWQTRVAQLPCRADTQVETPYGAFALNEWLRDGRALLKTSRGARLTATPWHREE</sequence>
<reference key="1">
    <citation type="journal article" date="1997" name="Eur. J. Biochem.">
        <title>Sequence of a gene cluster from Klebsiella pneumoniae encoding malonate decarboxylase and expression of the enzyme in Escherichia coli.</title>
        <authorList>
            <person name="Hoenke S."/>
            <person name="Schmid M."/>
            <person name="Dimroth P."/>
        </authorList>
    </citation>
    <scope>NUCLEOTIDE SEQUENCE [GENOMIC DNA]</scope>
</reference>
<reference key="2">
    <citation type="submission" date="1996-04" db="EMBL/GenBank/DDBJ databases">
        <title>Molecular characterization of the malonate utilization system in Klebsiella pneumoniae.</title>
        <authorList>
            <person name="Chang H."/>
            <person name="Deng W."/>
            <person name="Chaou S."/>
            <person name="Lee R."/>
            <person name="Peng H."/>
        </authorList>
    </citation>
    <scope>NUCLEOTIDE SEQUENCE [GENOMIC DNA]</scope>
    <source>
        <strain>CG43</strain>
    </source>
</reference>
<reference key="3">
    <citation type="journal article" date="2000" name="Biochemistry">
        <title>Biosynthesis of triphosphoribosyl-dephospho-coenzyme A, the precursor of the prosthetic group of malonate decarboxylase.</title>
        <authorList>
            <person name="Hoenke S."/>
            <person name="Wild M.R."/>
            <person name="Dimroth P."/>
        </authorList>
    </citation>
    <scope>FUNCTION</scope>
    <scope>CATALYTIC ACTIVITY</scope>
</reference>
<reference key="4">
    <citation type="journal article" date="2000" name="Biochemistry">
        <title>Identification of the active site of phosphoribosyl-dephospho-coenzyme A transferase and relationship of the enzyme to an ancient class of nucleotidyltransferases.</title>
        <authorList>
            <person name="Hoenke S."/>
            <person name="Schmid M."/>
            <person name="Dimroth P."/>
        </authorList>
    </citation>
    <scope>ACTIVE SITES</scope>
    <scope>MUTAGENESIS OF ASP-134 AND ASP-136</scope>
</reference>